<accession>A6QET4</accession>
<organism>
    <name type="scientific">Staphylococcus aureus (strain Newman)</name>
    <dbReference type="NCBI Taxonomy" id="426430"/>
    <lineage>
        <taxon>Bacteria</taxon>
        <taxon>Bacillati</taxon>
        <taxon>Bacillota</taxon>
        <taxon>Bacilli</taxon>
        <taxon>Bacillales</taxon>
        <taxon>Staphylococcaceae</taxon>
        <taxon>Staphylococcus</taxon>
    </lineage>
</organism>
<gene>
    <name type="primary">mnhB2</name>
    <name type="synonym">mrpB2</name>
    <name type="ordered locus">NWMN_0594</name>
</gene>
<keyword id="KW-0050">Antiport</keyword>
<keyword id="KW-1003">Cell membrane</keyword>
<keyword id="KW-0406">Ion transport</keyword>
<keyword id="KW-0472">Membrane</keyword>
<keyword id="KW-0812">Transmembrane</keyword>
<keyword id="KW-1133">Transmembrane helix</keyword>
<keyword id="KW-0813">Transport</keyword>
<evidence type="ECO:0000250" key="1"/>
<evidence type="ECO:0000255" key="2"/>
<evidence type="ECO:0000305" key="3"/>
<reference key="1">
    <citation type="journal article" date="2008" name="J. Bacteriol.">
        <title>Genome sequence of Staphylococcus aureus strain Newman and comparative analysis of staphylococcal genomes: polymorphism and evolution of two major pathogenicity islands.</title>
        <authorList>
            <person name="Baba T."/>
            <person name="Bae T."/>
            <person name="Schneewind O."/>
            <person name="Takeuchi F."/>
            <person name="Hiramatsu K."/>
        </authorList>
    </citation>
    <scope>NUCLEOTIDE SEQUENCE [LARGE SCALE GENOMIC DNA]</scope>
    <source>
        <strain>Newman</strain>
    </source>
</reference>
<proteinExistence type="inferred from homology"/>
<feature type="chain" id="PRO_0000372278" description="Putative antiporter subunit mnhB2">
    <location>
        <begin position="1"/>
        <end position="141"/>
    </location>
</feature>
<feature type="transmembrane region" description="Helical" evidence="2">
    <location>
        <begin position="10"/>
        <end position="30"/>
    </location>
</feature>
<feature type="transmembrane region" description="Helical" evidence="2">
    <location>
        <begin position="35"/>
        <end position="55"/>
    </location>
</feature>
<feature type="transmembrane region" description="Helical" evidence="2">
    <location>
        <begin position="70"/>
        <end position="90"/>
    </location>
</feature>
<feature type="transmembrane region" description="Helical" evidence="2">
    <location>
        <begin position="114"/>
        <end position="134"/>
    </location>
</feature>
<name>MNHB2_STAAE</name>
<comment type="subunit">
    <text evidence="1">May form a heterooligomeric complex that consists of seven subunits: mnhA2, mnhB2, mnhC2, mnhD2, mnhE2, mnhF2 and mnhG2.</text>
</comment>
<comment type="subcellular location">
    <subcellularLocation>
        <location evidence="3">Cell membrane</location>
        <topology evidence="3">Multi-pass membrane protein</topology>
    </subcellularLocation>
</comment>
<comment type="similarity">
    <text evidence="3">Belongs to the CPA3 antiporters (TC 2.A.63) subunit B family.</text>
</comment>
<dbReference type="EMBL" id="AP009351">
    <property type="protein sequence ID" value="BAF66866.1"/>
    <property type="molecule type" value="Genomic_DNA"/>
</dbReference>
<dbReference type="RefSeq" id="WP_000661906.1">
    <property type="nucleotide sequence ID" value="NZ_JBBIAE010000002.1"/>
</dbReference>
<dbReference type="SMR" id="A6QET4"/>
<dbReference type="KEGG" id="sae:NWMN_0594"/>
<dbReference type="HOGENOM" id="CLU_101659_1_1_9"/>
<dbReference type="Proteomes" id="UP000006386">
    <property type="component" value="Chromosome"/>
</dbReference>
<dbReference type="GO" id="GO:0005886">
    <property type="term" value="C:plasma membrane"/>
    <property type="evidence" value="ECO:0007669"/>
    <property type="project" value="UniProtKB-SubCell"/>
</dbReference>
<dbReference type="GO" id="GO:0015297">
    <property type="term" value="F:antiporter activity"/>
    <property type="evidence" value="ECO:0007669"/>
    <property type="project" value="UniProtKB-KW"/>
</dbReference>
<dbReference type="GO" id="GO:0006811">
    <property type="term" value="P:monoatomic ion transport"/>
    <property type="evidence" value="ECO:0007669"/>
    <property type="project" value="UniProtKB-KW"/>
</dbReference>
<dbReference type="InterPro" id="IPR050622">
    <property type="entry name" value="CPA3_antiporter_subunitB"/>
</dbReference>
<dbReference type="InterPro" id="IPR007182">
    <property type="entry name" value="MnhB"/>
</dbReference>
<dbReference type="NCBIfam" id="NF009223">
    <property type="entry name" value="PRK12573.1"/>
    <property type="match status" value="1"/>
</dbReference>
<dbReference type="NCBIfam" id="NF009224">
    <property type="entry name" value="PRK12574.1"/>
    <property type="match status" value="1"/>
</dbReference>
<dbReference type="PANTHER" id="PTHR33932">
    <property type="entry name" value="NA(+)/H(+) ANTIPORTER SUBUNIT B"/>
    <property type="match status" value="1"/>
</dbReference>
<dbReference type="PANTHER" id="PTHR33932:SF4">
    <property type="entry name" value="NA(+)_H(+) ANTIPORTER SUBUNIT B"/>
    <property type="match status" value="1"/>
</dbReference>
<dbReference type="Pfam" id="PF04039">
    <property type="entry name" value="MnhB"/>
    <property type="match status" value="1"/>
</dbReference>
<protein>
    <recommendedName>
        <fullName>Putative antiporter subunit mnhB2</fullName>
    </recommendedName>
    <alternativeName>
        <fullName>Mrp complex subunit B2</fullName>
    </alternativeName>
    <alternativeName>
        <fullName>Putative NADH-ubiquinone oxidoreductase subunit mnhB2</fullName>
    </alternativeName>
</protein>
<sequence>MKENDVVLRTVTKLVVFILLTFGFYVFFAGHNNPGGGFIGGLIFSSAFILMFLAFNVEEVLESLPIDFRILMIIGALVSSITAIIPMFFGKPFLSQYETTWILPILGQIHVSTITLFELGILFSVVGVIVTVMLSLSGGRS</sequence>